<evidence type="ECO:0000250" key="1">
    <source>
        <dbReference type="UniProtKB" id="D2XUU4"/>
    </source>
</evidence>
<evidence type="ECO:0000255" key="2"/>
<evidence type="ECO:0000269" key="3">
    <source>
    </source>
</evidence>
<evidence type="ECO:0000303" key="4">
    <source>
    </source>
</evidence>
<evidence type="ECO:0000305" key="5"/>
<evidence type="ECO:0000312" key="6">
    <source>
        <dbReference type="EMBL" id="AGN53402.1"/>
    </source>
</evidence>
<dbReference type="EMBL" id="KC701495">
    <property type="protein sequence ID" value="AGN53402.1"/>
    <property type="molecule type" value="mRNA"/>
</dbReference>
<dbReference type="RefSeq" id="XP_065653417.1">
    <property type="nucleotide sequence ID" value="XM_065797345.1"/>
</dbReference>
<dbReference type="RefSeq" id="XP_065653418.1">
    <property type="nucleotide sequence ID" value="XM_065797346.1"/>
</dbReference>
<dbReference type="GeneID" id="136080543"/>
<dbReference type="GeneID" id="136080544"/>
<dbReference type="Proteomes" id="UP000694840">
    <property type="component" value="Unplaced"/>
</dbReference>
<dbReference type="GO" id="GO:0005576">
    <property type="term" value="C:extracellular region"/>
    <property type="evidence" value="ECO:0007669"/>
    <property type="project" value="UniProtKB-SubCell"/>
</dbReference>
<organism>
    <name type="scientific">Hydra vulgaris</name>
    <name type="common">Hydra</name>
    <name type="synonym">Hydra attenuata</name>
    <dbReference type="NCBI Taxonomy" id="6087"/>
    <lineage>
        <taxon>Eukaryota</taxon>
        <taxon>Metazoa</taxon>
        <taxon>Cnidaria</taxon>
        <taxon>Hydrozoa</taxon>
        <taxon>Hydroidolina</taxon>
        <taxon>Anthoathecata</taxon>
        <taxon>Aplanulata</taxon>
        <taxon>Hydridae</taxon>
        <taxon>Hydra</taxon>
    </lineage>
</organism>
<accession>R9UC00</accession>
<reference evidence="6" key="1">
    <citation type="journal article" date="2013" name="Proc. Natl. Acad. Sci. U.S.A.">
        <title>Distinct antimicrobial peptide expression determines host species-specific bacterial associations.</title>
        <authorList>
            <person name="Franzenburg S."/>
            <person name="Walter J."/>
            <person name="Kunzel S."/>
            <person name="Wang J."/>
            <person name="Baines J.F."/>
            <person name="Bosch T.C."/>
            <person name="Fraune S."/>
        </authorList>
    </citation>
    <scope>NUCLEOTIDE SEQUENCE [MRNA]</scope>
    <scope>TISSUE SPECIFICITY</scope>
    <source>
        <strain>AEP</strain>
    </source>
</reference>
<protein>
    <recommendedName>
        <fullName evidence="4">Arminin 6494</fullName>
    </recommendedName>
</protein>
<comment type="function">
    <text evidence="1">Antimicrobial peptide with a broad-spectrum antimicrobial activity. Keeps its antibacterial activity under a wide range of salt concentrations that mimic physiological conditions of human blood, which is surprising, since Hydra is an obligate freshwater animal with nearly no salt tolerance. Does not affect red blood cells.</text>
</comment>
<comment type="subcellular location">
    <subcellularLocation>
        <location evidence="1">Secreted</location>
    </subcellularLocation>
    <subcellularLocation>
        <location evidence="1">Target cell membrane</location>
    </subcellularLocation>
</comment>
<comment type="tissue specificity">
    <text evidence="3">Expressed in entodermal epithelium along the body column.</text>
</comment>
<comment type="similarity">
    <text evidence="5">Belongs to the arminin family.</text>
</comment>
<feature type="signal peptide" evidence="2">
    <location>
        <begin position="1"/>
        <end position="18"/>
    </location>
</feature>
<feature type="propeptide" id="PRO_0000461975" evidence="1">
    <location>
        <begin position="19"/>
        <end position="57"/>
    </location>
</feature>
<feature type="peptide" id="PRO_5004490173" description="Arminin 6494" evidence="1">
    <location>
        <begin position="58"/>
        <end position="82"/>
    </location>
</feature>
<feature type="modified residue" description="Alanine amide" evidence="1">
    <location>
        <position position="82"/>
    </location>
</feature>
<proteinExistence type="evidence at transcript level"/>
<keyword id="KW-0027">Amidation</keyword>
<keyword id="KW-0044">Antibiotic</keyword>
<keyword id="KW-0929">Antimicrobial</keyword>
<keyword id="KW-0391">Immunity</keyword>
<keyword id="KW-0399">Innate immunity</keyword>
<keyword id="KW-0472">Membrane</keyword>
<keyword id="KW-1185">Reference proteome</keyword>
<keyword id="KW-0964">Secreted</keyword>
<keyword id="KW-0732">Signal</keyword>
<keyword id="KW-1052">Target cell membrane</keyword>
<keyword id="KW-1053">Target membrane</keyword>
<name>ARM94_HYDVU</name>
<sequence length="85" mass="10138">MKTVFAILFLAFIALTYARSYEDVKEEIKNEVEKEILEDLEEESDELNDKRKEINDAKPWRWVRRIRWKKLIPYIPVVVAAAGKK</sequence>